<gene>
    <name evidence="1" type="primary">pckA</name>
    <name type="ordered locus">Rsph17029_0313</name>
</gene>
<evidence type="ECO:0000255" key="1">
    <source>
        <dbReference type="HAMAP-Rule" id="MF_00453"/>
    </source>
</evidence>
<comment type="function">
    <text evidence="1">Involved in the gluconeogenesis. Catalyzes the conversion of oxaloacetate (OAA) to phosphoenolpyruvate (PEP) through direct phosphoryl transfer between the nucleoside triphosphate and OAA.</text>
</comment>
<comment type="catalytic activity">
    <reaction evidence="1">
        <text>oxaloacetate + ATP = phosphoenolpyruvate + ADP + CO2</text>
        <dbReference type="Rhea" id="RHEA:18617"/>
        <dbReference type="ChEBI" id="CHEBI:16452"/>
        <dbReference type="ChEBI" id="CHEBI:16526"/>
        <dbReference type="ChEBI" id="CHEBI:30616"/>
        <dbReference type="ChEBI" id="CHEBI:58702"/>
        <dbReference type="ChEBI" id="CHEBI:456216"/>
        <dbReference type="EC" id="4.1.1.49"/>
    </reaction>
</comment>
<comment type="cofactor">
    <cofactor evidence="1">
        <name>Mn(2+)</name>
        <dbReference type="ChEBI" id="CHEBI:29035"/>
    </cofactor>
    <text evidence="1">Binds 1 Mn(2+) ion per subunit.</text>
</comment>
<comment type="pathway">
    <text evidence="1">Carbohydrate biosynthesis; gluconeogenesis.</text>
</comment>
<comment type="subcellular location">
    <subcellularLocation>
        <location evidence="1">Cytoplasm</location>
    </subcellularLocation>
</comment>
<comment type="similarity">
    <text evidence="1">Belongs to the phosphoenolpyruvate carboxykinase (ATP) family.</text>
</comment>
<name>PCKA_CERS1</name>
<keyword id="KW-0067">ATP-binding</keyword>
<keyword id="KW-0963">Cytoplasm</keyword>
<keyword id="KW-0210">Decarboxylase</keyword>
<keyword id="KW-0312">Gluconeogenesis</keyword>
<keyword id="KW-0456">Lyase</keyword>
<keyword id="KW-0464">Manganese</keyword>
<keyword id="KW-0479">Metal-binding</keyword>
<keyword id="KW-0547">Nucleotide-binding</keyword>
<accession>A3PGG3</accession>
<proteinExistence type="inferred from homology"/>
<protein>
    <recommendedName>
        <fullName evidence="1">Phosphoenolpyruvate carboxykinase (ATP)</fullName>
        <shortName evidence="1">PCK</shortName>
        <shortName evidence="1">PEP carboxykinase</shortName>
        <shortName evidence="1">PEPCK</shortName>
        <ecNumber evidence="1">4.1.1.49</ecNumber>
    </recommendedName>
</protein>
<reference key="1">
    <citation type="submission" date="2007-02" db="EMBL/GenBank/DDBJ databases">
        <title>Complete sequence of chromosome 1 of Rhodobacter sphaeroides ATCC 17029.</title>
        <authorList>
            <person name="Copeland A."/>
            <person name="Lucas S."/>
            <person name="Lapidus A."/>
            <person name="Barry K."/>
            <person name="Detter J.C."/>
            <person name="Glavina del Rio T."/>
            <person name="Hammon N."/>
            <person name="Israni S."/>
            <person name="Dalin E."/>
            <person name="Tice H."/>
            <person name="Pitluck S."/>
            <person name="Kiss H."/>
            <person name="Brettin T."/>
            <person name="Bruce D."/>
            <person name="Han C."/>
            <person name="Tapia R."/>
            <person name="Gilna P."/>
            <person name="Schmutz J."/>
            <person name="Larimer F."/>
            <person name="Land M."/>
            <person name="Hauser L."/>
            <person name="Kyrpides N."/>
            <person name="Mikhailova N."/>
            <person name="Richardson P."/>
            <person name="Mackenzie C."/>
            <person name="Choudhary M."/>
            <person name="Donohue T.J."/>
            <person name="Kaplan S."/>
        </authorList>
    </citation>
    <scope>NUCLEOTIDE SEQUENCE [LARGE SCALE GENOMIC DNA]</scope>
    <source>
        <strain>ATCC 17029 / ATH 2.4.9</strain>
    </source>
</reference>
<feature type="chain" id="PRO_1000026346" description="Phosphoenolpyruvate carboxykinase (ATP)">
    <location>
        <begin position="1"/>
        <end position="532"/>
    </location>
</feature>
<feature type="binding site" evidence="1">
    <location>
        <position position="60"/>
    </location>
    <ligand>
        <name>substrate</name>
    </ligand>
</feature>
<feature type="binding site" evidence="1">
    <location>
        <position position="194"/>
    </location>
    <ligand>
        <name>substrate</name>
    </ligand>
</feature>
<feature type="binding site" evidence="1">
    <location>
        <position position="200"/>
    </location>
    <ligand>
        <name>ATP</name>
        <dbReference type="ChEBI" id="CHEBI:30616"/>
    </ligand>
</feature>
<feature type="binding site" evidence="1">
    <location>
        <position position="200"/>
    </location>
    <ligand>
        <name>Mn(2+)</name>
        <dbReference type="ChEBI" id="CHEBI:29035"/>
    </ligand>
</feature>
<feature type="binding site" evidence="1">
    <location>
        <position position="200"/>
    </location>
    <ligand>
        <name>substrate</name>
    </ligand>
</feature>
<feature type="binding site" evidence="1">
    <location>
        <position position="219"/>
    </location>
    <ligand>
        <name>ATP</name>
        <dbReference type="ChEBI" id="CHEBI:30616"/>
    </ligand>
</feature>
<feature type="binding site" evidence="1">
    <location>
        <position position="219"/>
    </location>
    <ligand>
        <name>Mn(2+)</name>
        <dbReference type="ChEBI" id="CHEBI:29035"/>
    </ligand>
</feature>
<feature type="binding site" evidence="1">
    <location>
        <begin position="237"/>
        <end position="245"/>
    </location>
    <ligand>
        <name>ATP</name>
        <dbReference type="ChEBI" id="CHEBI:30616"/>
    </ligand>
</feature>
<feature type="binding site" evidence="1">
    <location>
        <position position="258"/>
    </location>
    <ligand>
        <name>Mn(2+)</name>
        <dbReference type="ChEBI" id="CHEBI:29035"/>
    </ligand>
</feature>
<feature type="binding site" evidence="1">
    <location>
        <position position="286"/>
    </location>
    <ligand>
        <name>ATP</name>
        <dbReference type="ChEBI" id="CHEBI:30616"/>
    </ligand>
</feature>
<feature type="binding site" evidence="1">
    <location>
        <position position="324"/>
    </location>
    <ligand>
        <name>ATP</name>
        <dbReference type="ChEBI" id="CHEBI:30616"/>
    </ligand>
</feature>
<feature type="binding site" evidence="1">
    <location>
        <position position="324"/>
    </location>
    <ligand>
        <name>substrate</name>
    </ligand>
</feature>
<feature type="binding site" evidence="1">
    <location>
        <position position="449"/>
    </location>
    <ligand>
        <name>ATP</name>
        <dbReference type="ChEBI" id="CHEBI:30616"/>
    </ligand>
</feature>
<dbReference type="EC" id="4.1.1.49" evidence="1"/>
<dbReference type="EMBL" id="CP000577">
    <property type="protein sequence ID" value="ABN75429.1"/>
    <property type="molecule type" value="Genomic_DNA"/>
</dbReference>
<dbReference type="RefSeq" id="WP_002722428.1">
    <property type="nucleotide sequence ID" value="NC_009049.1"/>
</dbReference>
<dbReference type="SMR" id="A3PGG3"/>
<dbReference type="KEGG" id="rsh:Rsph17029_0313"/>
<dbReference type="HOGENOM" id="CLU_018247_0_1_5"/>
<dbReference type="UniPathway" id="UPA00138"/>
<dbReference type="GO" id="GO:0005829">
    <property type="term" value="C:cytosol"/>
    <property type="evidence" value="ECO:0007669"/>
    <property type="project" value="TreeGrafter"/>
</dbReference>
<dbReference type="GO" id="GO:0005524">
    <property type="term" value="F:ATP binding"/>
    <property type="evidence" value="ECO:0007669"/>
    <property type="project" value="UniProtKB-UniRule"/>
</dbReference>
<dbReference type="GO" id="GO:0046872">
    <property type="term" value="F:metal ion binding"/>
    <property type="evidence" value="ECO:0007669"/>
    <property type="project" value="UniProtKB-KW"/>
</dbReference>
<dbReference type="GO" id="GO:0004612">
    <property type="term" value="F:phosphoenolpyruvate carboxykinase (ATP) activity"/>
    <property type="evidence" value="ECO:0007669"/>
    <property type="project" value="UniProtKB-UniRule"/>
</dbReference>
<dbReference type="GO" id="GO:0006094">
    <property type="term" value="P:gluconeogenesis"/>
    <property type="evidence" value="ECO:0007669"/>
    <property type="project" value="UniProtKB-UniRule"/>
</dbReference>
<dbReference type="CDD" id="cd00484">
    <property type="entry name" value="PEPCK_ATP"/>
    <property type="match status" value="1"/>
</dbReference>
<dbReference type="Gene3D" id="3.90.228.20">
    <property type="match status" value="1"/>
</dbReference>
<dbReference type="Gene3D" id="3.40.449.10">
    <property type="entry name" value="Phosphoenolpyruvate Carboxykinase, domain 1"/>
    <property type="match status" value="1"/>
</dbReference>
<dbReference type="Gene3D" id="2.170.8.10">
    <property type="entry name" value="Phosphoenolpyruvate Carboxykinase, domain 2"/>
    <property type="match status" value="1"/>
</dbReference>
<dbReference type="HAMAP" id="MF_00453">
    <property type="entry name" value="PEPCK_ATP"/>
    <property type="match status" value="1"/>
</dbReference>
<dbReference type="InterPro" id="IPR001272">
    <property type="entry name" value="PEP_carboxykinase_ATP"/>
</dbReference>
<dbReference type="InterPro" id="IPR013035">
    <property type="entry name" value="PEP_carboxykinase_C"/>
</dbReference>
<dbReference type="InterPro" id="IPR008210">
    <property type="entry name" value="PEP_carboxykinase_N"/>
</dbReference>
<dbReference type="NCBIfam" id="TIGR00224">
    <property type="entry name" value="pckA"/>
    <property type="match status" value="1"/>
</dbReference>
<dbReference type="NCBIfam" id="NF006820">
    <property type="entry name" value="PRK09344.1-2"/>
    <property type="match status" value="1"/>
</dbReference>
<dbReference type="NCBIfam" id="NF006821">
    <property type="entry name" value="PRK09344.1-3"/>
    <property type="match status" value="1"/>
</dbReference>
<dbReference type="NCBIfam" id="NF006822">
    <property type="entry name" value="PRK09344.1-4"/>
    <property type="match status" value="1"/>
</dbReference>
<dbReference type="PANTHER" id="PTHR30031:SF0">
    <property type="entry name" value="PHOSPHOENOLPYRUVATE CARBOXYKINASE (ATP)"/>
    <property type="match status" value="1"/>
</dbReference>
<dbReference type="PANTHER" id="PTHR30031">
    <property type="entry name" value="PHOSPHOENOLPYRUVATE CARBOXYKINASE ATP"/>
    <property type="match status" value="1"/>
</dbReference>
<dbReference type="Pfam" id="PF01293">
    <property type="entry name" value="PEPCK_ATP"/>
    <property type="match status" value="1"/>
</dbReference>
<dbReference type="PIRSF" id="PIRSF006294">
    <property type="entry name" value="PEP_crbxkin"/>
    <property type="match status" value="1"/>
</dbReference>
<dbReference type="SUPFAM" id="SSF68923">
    <property type="entry name" value="PEP carboxykinase N-terminal domain"/>
    <property type="match status" value="1"/>
</dbReference>
<dbReference type="SUPFAM" id="SSF53795">
    <property type="entry name" value="PEP carboxykinase-like"/>
    <property type="match status" value="1"/>
</dbReference>
<organism>
    <name type="scientific">Cereibacter sphaeroides (strain ATCC 17029 / ATH 2.4.9)</name>
    <name type="common">Rhodobacter sphaeroides</name>
    <dbReference type="NCBI Taxonomy" id="349101"/>
    <lineage>
        <taxon>Bacteria</taxon>
        <taxon>Pseudomonadati</taxon>
        <taxon>Pseudomonadota</taxon>
        <taxon>Alphaproteobacteria</taxon>
        <taxon>Rhodobacterales</taxon>
        <taxon>Paracoccaceae</taxon>
        <taxon>Cereibacter</taxon>
    </lineage>
</organism>
<sequence length="532" mass="58277">MNFGRVNPAQTLDAQGITGLGEVHYNLIEPALVEAAVTRGEGRLGRGGAFLCSTGAFTGRSPKDKFVVRTPSVEDTIWWENNAPMDPAAFDRLHADMLEHMKGRTYFVQDLFAGADPELRLDVRMVTELAWHGLFIRHMLRRPERAELDSFVPDWTVINCPSFKADPERHGCRTDTVIVLNFERKLILIANTEYAGENKKSVFTLLNYILPGKGVMAMHCSANHALGDTDDAAVFFGLSGTGKTTLSADPSRTLIGDDEHGWSDRGTFNFEGGCYAKTINLSAEAEPEIYATTSKFATVVENMVYDEETLELDFNDDSLTANTRCAYPLDYISNASESGLGGHPKNVIMLTCDAFGVLPPIARLTPAQAMYHFLSGFTSKVAGTERGVTEPQPTFSTCFGAPFMPRRPEVYGKLLQEKIAKHGATCWLVNTGWTGGAYGTGKRMPIKATRALLTAALDGSLSGVQFRRDPNFGFEVPVDLHGVDAKLLDPRSTWADPAAYDQQAKKLVEMFANNFAQYVPFIDADVKAAAIG</sequence>